<proteinExistence type="inferred from homology"/>
<comment type="similarity">
    <text evidence="1">Belongs to the bacterial ribosomal protein bL33 family.</text>
</comment>
<protein>
    <recommendedName>
        <fullName evidence="1">Large ribosomal subunit protein bL33</fullName>
    </recommendedName>
    <alternativeName>
        <fullName evidence="2">50S ribosomal protein L33</fullName>
    </alternativeName>
</protein>
<sequence length="56" mass="6632">MAKKNKNVLVRLVSTAGTGVFWVKKRNPKTQTEKLSFRKYDKVVRKHVLFKEEKIK</sequence>
<organism>
    <name type="scientific">Rickettsia akari (strain Hartford)</name>
    <dbReference type="NCBI Taxonomy" id="293614"/>
    <lineage>
        <taxon>Bacteria</taxon>
        <taxon>Pseudomonadati</taxon>
        <taxon>Pseudomonadota</taxon>
        <taxon>Alphaproteobacteria</taxon>
        <taxon>Rickettsiales</taxon>
        <taxon>Rickettsiaceae</taxon>
        <taxon>Rickettsieae</taxon>
        <taxon>Rickettsia</taxon>
        <taxon>spotted fever group</taxon>
    </lineage>
</organism>
<evidence type="ECO:0000255" key="1">
    <source>
        <dbReference type="HAMAP-Rule" id="MF_00294"/>
    </source>
</evidence>
<evidence type="ECO:0000305" key="2"/>
<accession>A8GQA8</accession>
<reference key="1">
    <citation type="submission" date="2007-09" db="EMBL/GenBank/DDBJ databases">
        <title>Complete genome sequence of Rickettsia akari.</title>
        <authorList>
            <person name="Madan A."/>
            <person name="Fahey J."/>
            <person name="Helton E."/>
            <person name="Ketteman M."/>
            <person name="Madan A."/>
            <person name="Rodrigues S."/>
            <person name="Sanchez A."/>
            <person name="Whiting M."/>
            <person name="Dasch G."/>
            <person name="Eremeeva M."/>
        </authorList>
    </citation>
    <scope>NUCLEOTIDE SEQUENCE [LARGE SCALE GENOMIC DNA]</scope>
    <source>
        <strain>Hartford</strain>
    </source>
</reference>
<keyword id="KW-0687">Ribonucleoprotein</keyword>
<keyword id="KW-0689">Ribosomal protein</keyword>
<feature type="chain" id="PRO_1000004185" description="Large ribosomal subunit protein bL33">
    <location>
        <begin position="1"/>
        <end position="56"/>
    </location>
</feature>
<gene>
    <name evidence="1" type="primary">rpmG</name>
    <name type="ordered locus">A1C_06800</name>
</gene>
<dbReference type="EMBL" id="CP000847">
    <property type="protein sequence ID" value="ABV75583.1"/>
    <property type="molecule type" value="Genomic_DNA"/>
</dbReference>
<dbReference type="RefSeq" id="WP_004997072.1">
    <property type="nucleotide sequence ID" value="NC_009881.1"/>
</dbReference>
<dbReference type="SMR" id="A8GQA8"/>
<dbReference type="STRING" id="293614.A1C_06800"/>
<dbReference type="GeneID" id="95361741"/>
<dbReference type="KEGG" id="rak:A1C_06800"/>
<dbReference type="eggNOG" id="COG0267">
    <property type="taxonomic scope" value="Bacteria"/>
</dbReference>
<dbReference type="HOGENOM" id="CLU_190949_1_0_5"/>
<dbReference type="Proteomes" id="UP000006830">
    <property type="component" value="Chromosome"/>
</dbReference>
<dbReference type="GO" id="GO:0005737">
    <property type="term" value="C:cytoplasm"/>
    <property type="evidence" value="ECO:0007669"/>
    <property type="project" value="UniProtKB-ARBA"/>
</dbReference>
<dbReference type="GO" id="GO:0015934">
    <property type="term" value="C:large ribosomal subunit"/>
    <property type="evidence" value="ECO:0007669"/>
    <property type="project" value="TreeGrafter"/>
</dbReference>
<dbReference type="GO" id="GO:0003735">
    <property type="term" value="F:structural constituent of ribosome"/>
    <property type="evidence" value="ECO:0007669"/>
    <property type="project" value="InterPro"/>
</dbReference>
<dbReference type="GO" id="GO:0006412">
    <property type="term" value="P:translation"/>
    <property type="evidence" value="ECO:0007669"/>
    <property type="project" value="UniProtKB-UniRule"/>
</dbReference>
<dbReference type="Gene3D" id="2.20.28.120">
    <property type="entry name" value="Ribosomal protein L33"/>
    <property type="match status" value="1"/>
</dbReference>
<dbReference type="HAMAP" id="MF_00294">
    <property type="entry name" value="Ribosomal_bL33"/>
    <property type="match status" value="1"/>
</dbReference>
<dbReference type="InterPro" id="IPR001705">
    <property type="entry name" value="Ribosomal_bL33"/>
</dbReference>
<dbReference type="InterPro" id="IPR018264">
    <property type="entry name" value="Ribosomal_bL33_CS"/>
</dbReference>
<dbReference type="InterPro" id="IPR038584">
    <property type="entry name" value="Ribosomal_bL33_sf"/>
</dbReference>
<dbReference type="InterPro" id="IPR011332">
    <property type="entry name" value="Ribosomal_zn-bd"/>
</dbReference>
<dbReference type="NCBIfam" id="NF001860">
    <property type="entry name" value="PRK00595.1"/>
    <property type="match status" value="1"/>
</dbReference>
<dbReference type="NCBIfam" id="TIGR01023">
    <property type="entry name" value="rpmG_bact"/>
    <property type="match status" value="1"/>
</dbReference>
<dbReference type="PANTHER" id="PTHR15238">
    <property type="entry name" value="54S RIBOSOMAL PROTEIN L39, MITOCHONDRIAL"/>
    <property type="match status" value="1"/>
</dbReference>
<dbReference type="PANTHER" id="PTHR15238:SF1">
    <property type="entry name" value="LARGE RIBOSOMAL SUBUNIT PROTEIN BL33M"/>
    <property type="match status" value="1"/>
</dbReference>
<dbReference type="Pfam" id="PF00471">
    <property type="entry name" value="Ribosomal_L33"/>
    <property type="match status" value="1"/>
</dbReference>
<dbReference type="SUPFAM" id="SSF57829">
    <property type="entry name" value="Zn-binding ribosomal proteins"/>
    <property type="match status" value="1"/>
</dbReference>
<dbReference type="PROSITE" id="PS00582">
    <property type="entry name" value="RIBOSOMAL_L33"/>
    <property type="match status" value="1"/>
</dbReference>
<name>RL33_RICAH</name>